<accession>Q91ZV2</accession>
<dbReference type="EMBL" id="AF387549">
    <property type="protein sequence ID" value="AAL30180.1"/>
    <property type="molecule type" value="mRNA"/>
</dbReference>
<dbReference type="RefSeq" id="NP_569103.1">
    <property type="nucleotide sequence ID" value="NM_130419.1"/>
</dbReference>
<dbReference type="SMR" id="Q91ZV2"/>
<dbReference type="FunCoup" id="Q91ZV2">
    <property type="interactions" value="1405"/>
</dbReference>
<dbReference type="STRING" id="10116.ENSRNOP00000069998"/>
<dbReference type="GlyCosmos" id="Q91ZV2">
    <property type="glycosylation" value="5 sites, No reported glycans"/>
</dbReference>
<dbReference type="GlyGen" id="Q91ZV2">
    <property type="glycosylation" value="5 sites"/>
</dbReference>
<dbReference type="PhosphoSitePlus" id="Q91ZV2"/>
<dbReference type="PaxDb" id="10116-ENSRNOP00000002251"/>
<dbReference type="GeneID" id="155696"/>
<dbReference type="KEGG" id="rno:155696"/>
<dbReference type="UCSC" id="RGD:620543">
    <property type="organism name" value="rat"/>
</dbReference>
<dbReference type="AGR" id="RGD:620543"/>
<dbReference type="CTD" id="131566"/>
<dbReference type="RGD" id="620543">
    <property type="gene designation" value="Dcbld2"/>
</dbReference>
<dbReference type="eggNOG" id="ENOG502QRMB">
    <property type="taxonomic scope" value="Eukaryota"/>
</dbReference>
<dbReference type="InParanoid" id="Q91ZV2"/>
<dbReference type="PhylomeDB" id="Q91ZV2"/>
<dbReference type="PRO" id="PR:Q91ZV2"/>
<dbReference type="Proteomes" id="UP000002494">
    <property type="component" value="Unplaced"/>
</dbReference>
<dbReference type="GO" id="GO:0009986">
    <property type="term" value="C:cell surface"/>
    <property type="evidence" value="ECO:0000250"/>
    <property type="project" value="UniProtKB"/>
</dbReference>
<dbReference type="GO" id="GO:0005886">
    <property type="term" value="C:plasma membrane"/>
    <property type="evidence" value="ECO:0000250"/>
    <property type="project" value="UniProtKB"/>
</dbReference>
<dbReference type="GO" id="GO:0038023">
    <property type="term" value="F:signaling receptor activity"/>
    <property type="evidence" value="ECO:0000318"/>
    <property type="project" value="GO_Central"/>
</dbReference>
<dbReference type="GO" id="GO:0030308">
    <property type="term" value="P:negative regulation of cell growth"/>
    <property type="evidence" value="ECO:0000250"/>
    <property type="project" value="UniProtKB"/>
</dbReference>
<dbReference type="GO" id="GO:0042060">
    <property type="term" value="P:wound healing"/>
    <property type="evidence" value="ECO:0000250"/>
    <property type="project" value="UniProtKB"/>
</dbReference>
<dbReference type="CDD" id="cd00041">
    <property type="entry name" value="CUB"/>
    <property type="match status" value="1"/>
</dbReference>
<dbReference type="CDD" id="cd00057">
    <property type="entry name" value="FA58C"/>
    <property type="match status" value="1"/>
</dbReference>
<dbReference type="FunFam" id="2.60.120.260:FF:000002">
    <property type="entry name" value="Coagulation factor VIII"/>
    <property type="match status" value="1"/>
</dbReference>
<dbReference type="FunFam" id="2.170.130.20:FF:000002">
    <property type="entry name" value="Discoidin, CUB and LCCL domain-containing protein 2"/>
    <property type="match status" value="1"/>
</dbReference>
<dbReference type="FunFam" id="2.60.120.290:FF:000035">
    <property type="entry name" value="Discoidin, CUB and LCCL domain-containing protein 2"/>
    <property type="match status" value="1"/>
</dbReference>
<dbReference type="Gene3D" id="2.60.120.260">
    <property type="entry name" value="Galactose-binding domain-like"/>
    <property type="match status" value="1"/>
</dbReference>
<dbReference type="Gene3D" id="2.170.130.20">
    <property type="entry name" value="LCCL-like domain"/>
    <property type="match status" value="1"/>
</dbReference>
<dbReference type="Gene3D" id="2.60.120.290">
    <property type="entry name" value="Spermadhesin, CUB domain"/>
    <property type="match status" value="1"/>
</dbReference>
<dbReference type="InterPro" id="IPR000859">
    <property type="entry name" value="CUB_dom"/>
</dbReference>
<dbReference type="InterPro" id="IPR000421">
    <property type="entry name" value="FA58C"/>
</dbReference>
<dbReference type="InterPro" id="IPR008979">
    <property type="entry name" value="Galactose-bd-like_sf"/>
</dbReference>
<dbReference type="InterPro" id="IPR004043">
    <property type="entry name" value="LCCL"/>
</dbReference>
<dbReference type="InterPro" id="IPR036609">
    <property type="entry name" value="LCCL_sf"/>
</dbReference>
<dbReference type="InterPro" id="IPR050633">
    <property type="entry name" value="Neuropilin_MCO_CoagFactor"/>
</dbReference>
<dbReference type="InterPro" id="IPR035914">
    <property type="entry name" value="Sperma_CUB_dom_sf"/>
</dbReference>
<dbReference type="PANTHER" id="PTHR46806:SF3">
    <property type="entry name" value="DISCOIDIN, CUB AND LCCL DOMAIN-CONTAINING PROTEIN 2"/>
    <property type="match status" value="1"/>
</dbReference>
<dbReference type="PANTHER" id="PTHR46806">
    <property type="entry name" value="F5/8 TYPE C DOMAIN-CONTAINING PROTEIN"/>
    <property type="match status" value="1"/>
</dbReference>
<dbReference type="Pfam" id="PF00431">
    <property type="entry name" value="CUB"/>
    <property type="match status" value="1"/>
</dbReference>
<dbReference type="Pfam" id="PF00754">
    <property type="entry name" value="F5_F8_type_C"/>
    <property type="match status" value="1"/>
</dbReference>
<dbReference type="Pfam" id="PF03815">
    <property type="entry name" value="LCCL"/>
    <property type="match status" value="1"/>
</dbReference>
<dbReference type="SMART" id="SM00042">
    <property type="entry name" value="CUB"/>
    <property type="match status" value="1"/>
</dbReference>
<dbReference type="SMART" id="SM00231">
    <property type="entry name" value="FA58C"/>
    <property type="match status" value="1"/>
</dbReference>
<dbReference type="SMART" id="SM00603">
    <property type="entry name" value="LCCL"/>
    <property type="match status" value="1"/>
</dbReference>
<dbReference type="SUPFAM" id="SSF49785">
    <property type="entry name" value="Galactose-binding domain-like"/>
    <property type="match status" value="1"/>
</dbReference>
<dbReference type="SUPFAM" id="SSF69848">
    <property type="entry name" value="LCCL domain"/>
    <property type="match status" value="1"/>
</dbReference>
<dbReference type="SUPFAM" id="SSF49854">
    <property type="entry name" value="Spermadhesin, CUB domain"/>
    <property type="match status" value="1"/>
</dbReference>
<dbReference type="PROSITE" id="PS01180">
    <property type="entry name" value="CUB"/>
    <property type="match status" value="1"/>
</dbReference>
<dbReference type="PROSITE" id="PS01285">
    <property type="entry name" value="FA58C_1"/>
    <property type="match status" value="1"/>
</dbReference>
<dbReference type="PROSITE" id="PS50022">
    <property type="entry name" value="FA58C_3"/>
    <property type="match status" value="1"/>
</dbReference>
<dbReference type="PROSITE" id="PS50820">
    <property type="entry name" value="LCCL"/>
    <property type="match status" value="1"/>
</dbReference>
<reference key="1">
    <citation type="journal article" date="2001" name="J. Biol. Chem.">
        <title>ESDN, a novel neuropilin-like membrane protein cloned from vascular cells with the longest secretory signal sequence among eukaryotes, is up-regulated after vascular injury.</title>
        <authorList>
            <person name="Kobuke K."/>
            <person name="Furukawa Y."/>
            <person name="Sugai M."/>
            <person name="Tanigaki K."/>
            <person name="Ohashi N."/>
            <person name="Matsumori A."/>
            <person name="Sasayama S."/>
            <person name="Honjo T."/>
            <person name="Tashiro K."/>
        </authorList>
    </citation>
    <scope>NUCLEOTIDE SEQUENCE [MRNA]</scope>
    <source>
        <strain>Sprague-Dawley</strain>
    </source>
</reference>
<gene>
    <name type="primary">Dcbld2</name>
    <name type="synonym">Esdn</name>
</gene>
<proteinExistence type="evidence at transcript level"/>
<evidence type="ECO:0000250" key="1"/>
<evidence type="ECO:0000250" key="2">
    <source>
        <dbReference type="UniProtKB" id="Q96PD2"/>
    </source>
</evidence>
<evidence type="ECO:0000255" key="3"/>
<evidence type="ECO:0000255" key="4">
    <source>
        <dbReference type="PROSITE-ProRule" id="PRU00059"/>
    </source>
</evidence>
<evidence type="ECO:0000255" key="5">
    <source>
        <dbReference type="PROSITE-ProRule" id="PRU00081"/>
    </source>
</evidence>
<evidence type="ECO:0000255" key="6">
    <source>
        <dbReference type="PROSITE-ProRule" id="PRU00123"/>
    </source>
</evidence>
<evidence type="ECO:0000256" key="7">
    <source>
        <dbReference type="SAM" id="MobiDB-lite"/>
    </source>
</evidence>
<name>DCBD2_RAT</name>
<protein>
    <recommendedName>
        <fullName>Discoidin, CUB and LCCL domain-containing protein 2</fullName>
    </recommendedName>
    <alternativeName>
        <fullName>Endothelial and smooth muscle cell-derived neuropilin-like protein</fullName>
    </alternativeName>
</protein>
<sequence>MASRAPLRAARSPQDPGGRAAPAATGRAPLPSAGWCPLPPGRNSSSRPRLLLLLLLLLPDAGAQKGDGCGHTVLGPESGTLTSINYPHTYPNSTVCKWEIRVKTGERIRIKFGDFDIEDSDYCHLNYLKIFNGIGVSRTEIGKYCGLGLQMNQSIESKGSEITVLFMSGIHASGRGFLASYSVIDKQDLITCLDTVSNFLEPEFSKYCPAGCLLPFAEISGTIPHGYRDSSPLCMAGIHAGVVSDVLGGQISVVISKGTPYYESSLANNVTSMVGYLSTSLFTFKTSGCYGTLGMESGVIADPQITASSVLEWTDHMGQENSWKPEKARLRKPGPPWAAFATDEHQWLQIDLNKEKKITGIVTTGSTLIEHNYYVSAYRVLYSDDGQKWTVYREPGAAQDKIFQGNKDYHKDVRNNFLPPIIARFIRVNPVQWQQKIAMKVELLGCQFTLKGRLPKLTQPPPPRNSNNLKNTTVHPKLGRAPKFTQALQPRSRNDLPLLPAQTTATPDVKNTTVTPSVTKDVALAAVLVPVLVMALTTLILILVCAWHWRNRKKKAEGTYDLPHWDRAGWWKGVKQLLPAKSVEHEETPVRYSNSEVSHLSPREVTTVLQADSAEYAQPLVGGIVGTLHQRSTFKPEEGKEASYADLDPYNAPVQEVYHAYAEPLPVTGPEYATPIVMDMSGHSTASVGLPSTSTFRTAGNQPPALVGTYNTLLSRTDSCSSGQAQYDTPKGGKPAAAPEELVYQVPQSTQEASGAGRDEKFDAFKETL</sequence>
<feature type="signal peptide" evidence="3">
    <location>
        <begin position="1"/>
        <end position="63"/>
    </location>
</feature>
<feature type="chain" id="PRO_0000021080" description="Discoidin, CUB and LCCL domain-containing protein 2">
    <location>
        <begin position="64"/>
        <end position="769"/>
    </location>
</feature>
<feature type="topological domain" description="Extracellular" evidence="3">
    <location>
        <begin position="64"/>
        <end position="523"/>
    </location>
</feature>
<feature type="transmembrane region" description="Helical" evidence="3">
    <location>
        <begin position="524"/>
        <end position="544"/>
    </location>
</feature>
<feature type="topological domain" description="Cytoplasmic" evidence="3">
    <location>
        <begin position="545"/>
        <end position="769"/>
    </location>
</feature>
<feature type="domain" description="CUB" evidence="4">
    <location>
        <begin position="69"/>
        <end position="184"/>
    </location>
</feature>
<feature type="domain" description="LCCL" evidence="6">
    <location>
        <begin position="184"/>
        <end position="282"/>
    </location>
</feature>
<feature type="domain" description="F5/8 type C" evidence="5">
    <location>
        <begin position="289"/>
        <end position="446"/>
    </location>
</feature>
<feature type="region of interest" description="Disordered" evidence="7">
    <location>
        <begin position="1"/>
        <end position="39"/>
    </location>
</feature>
<feature type="region of interest" description="Disordered" evidence="7">
    <location>
        <begin position="455"/>
        <end position="476"/>
    </location>
</feature>
<feature type="region of interest" description="Disordered" evidence="7">
    <location>
        <begin position="719"/>
        <end position="769"/>
    </location>
</feature>
<feature type="compositionally biased region" description="Low complexity" evidence="7">
    <location>
        <begin position="1"/>
        <end position="29"/>
    </location>
</feature>
<feature type="compositionally biased region" description="Polar residues" evidence="7">
    <location>
        <begin position="465"/>
        <end position="474"/>
    </location>
</feature>
<feature type="compositionally biased region" description="Basic and acidic residues" evidence="7">
    <location>
        <begin position="757"/>
        <end position="769"/>
    </location>
</feature>
<feature type="modified residue" description="Phosphoserine" evidence="2">
    <location>
        <position position="601"/>
    </location>
</feature>
<feature type="glycosylation site" description="N-linked (GlcNAc...) asparagine" evidence="3">
    <location>
        <position position="92"/>
    </location>
</feature>
<feature type="glycosylation site" description="N-linked (GlcNAc...) asparagine" evidence="3">
    <location>
        <position position="152"/>
    </location>
</feature>
<feature type="glycosylation site" description="N-linked (GlcNAc...) asparagine" evidence="3">
    <location>
        <position position="269"/>
    </location>
</feature>
<feature type="glycosylation site" description="N-linked (GlcNAc...) asparagine" evidence="3">
    <location>
        <position position="471"/>
    </location>
</feature>
<feature type="glycosylation site" description="N-linked (GlcNAc...) asparagine" evidence="3">
    <location>
        <position position="511"/>
    </location>
</feature>
<feature type="disulfide bond" evidence="1">
    <location>
        <begin position="69"/>
        <end position="96"/>
    </location>
</feature>
<feature type="disulfide bond" evidence="1">
    <location>
        <begin position="123"/>
        <end position="145"/>
    </location>
</feature>
<feature type="disulfide bond" evidence="1">
    <location>
        <begin position="212"/>
        <end position="234"/>
    </location>
</feature>
<feature type="disulfide bond" evidence="1">
    <location>
        <begin position="289"/>
        <end position="446"/>
    </location>
</feature>
<organism>
    <name type="scientific">Rattus norvegicus</name>
    <name type="common">Rat</name>
    <dbReference type="NCBI Taxonomy" id="10116"/>
    <lineage>
        <taxon>Eukaryota</taxon>
        <taxon>Metazoa</taxon>
        <taxon>Chordata</taxon>
        <taxon>Craniata</taxon>
        <taxon>Vertebrata</taxon>
        <taxon>Euteleostomi</taxon>
        <taxon>Mammalia</taxon>
        <taxon>Eutheria</taxon>
        <taxon>Euarchontoglires</taxon>
        <taxon>Glires</taxon>
        <taxon>Rodentia</taxon>
        <taxon>Myomorpha</taxon>
        <taxon>Muroidea</taxon>
        <taxon>Muridae</taxon>
        <taxon>Murinae</taxon>
        <taxon>Rattus</taxon>
    </lineage>
</organism>
<comment type="subcellular location">
    <subcellularLocation>
        <location evidence="1">Membrane</location>
        <topology evidence="1">Single-pass type I membrane protein</topology>
    </subcellularLocation>
</comment>
<keyword id="KW-1015">Disulfide bond</keyword>
<keyword id="KW-0325">Glycoprotein</keyword>
<keyword id="KW-0472">Membrane</keyword>
<keyword id="KW-0597">Phosphoprotein</keyword>
<keyword id="KW-1185">Reference proteome</keyword>
<keyword id="KW-0732">Signal</keyword>
<keyword id="KW-0812">Transmembrane</keyword>
<keyword id="KW-1133">Transmembrane helix</keyword>